<evidence type="ECO:0000250" key="1"/>
<evidence type="ECO:0000255" key="2">
    <source>
        <dbReference type="HAMAP-Rule" id="MF_00492"/>
    </source>
</evidence>
<reference key="1">
    <citation type="submission" date="2007-03" db="EMBL/GenBank/DDBJ databases">
        <title>Complete sequence of chromosome 1 of Burkholderia vietnamiensis G4.</title>
        <authorList>
            <consortium name="US DOE Joint Genome Institute"/>
            <person name="Copeland A."/>
            <person name="Lucas S."/>
            <person name="Lapidus A."/>
            <person name="Barry K."/>
            <person name="Detter J.C."/>
            <person name="Glavina del Rio T."/>
            <person name="Hammon N."/>
            <person name="Israni S."/>
            <person name="Dalin E."/>
            <person name="Tice H."/>
            <person name="Pitluck S."/>
            <person name="Chain P."/>
            <person name="Malfatti S."/>
            <person name="Shin M."/>
            <person name="Vergez L."/>
            <person name="Schmutz J."/>
            <person name="Larimer F."/>
            <person name="Land M."/>
            <person name="Hauser L."/>
            <person name="Kyrpides N."/>
            <person name="Tiedje J."/>
            <person name="Richardson P."/>
        </authorList>
    </citation>
    <scope>NUCLEOTIDE SEQUENCE [LARGE SCALE GENOMIC DNA]</scope>
    <source>
        <strain>G4 / LMG 22486</strain>
    </source>
</reference>
<dbReference type="EC" id="2.2.1.2" evidence="2"/>
<dbReference type="EMBL" id="CP000614">
    <property type="protein sequence ID" value="ABO55424.1"/>
    <property type="molecule type" value="Genomic_DNA"/>
</dbReference>
<dbReference type="SMR" id="A4JGM1"/>
<dbReference type="KEGG" id="bvi:Bcep1808_2425"/>
<dbReference type="eggNOG" id="COG0176">
    <property type="taxonomic scope" value="Bacteria"/>
</dbReference>
<dbReference type="HOGENOM" id="CLU_047470_0_1_4"/>
<dbReference type="UniPathway" id="UPA00115">
    <property type="reaction ID" value="UER00414"/>
</dbReference>
<dbReference type="Proteomes" id="UP000002287">
    <property type="component" value="Chromosome 1"/>
</dbReference>
<dbReference type="GO" id="GO:0005737">
    <property type="term" value="C:cytoplasm"/>
    <property type="evidence" value="ECO:0007669"/>
    <property type="project" value="UniProtKB-SubCell"/>
</dbReference>
<dbReference type="GO" id="GO:0004801">
    <property type="term" value="F:transaldolase activity"/>
    <property type="evidence" value="ECO:0000250"/>
    <property type="project" value="UniProtKB"/>
</dbReference>
<dbReference type="GO" id="GO:0005975">
    <property type="term" value="P:carbohydrate metabolic process"/>
    <property type="evidence" value="ECO:0007669"/>
    <property type="project" value="InterPro"/>
</dbReference>
<dbReference type="GO" id="GO:0006098">
    <property type="term" value="P:pentose-phosphate shunt"/>
    <property type="evidence" value="ECO:0007669"/>
    <property type="project" value="UniProtKB-UniRule"/>
</dbReference>
<dbReference type="CDD" id="cd00957">
    <property type="entry name" value="Transaldolase_TalAB"/>
    <property type="match status" value="1"/>
</dbReference>
<dbReference type="FunFam" id="3.20.20.70:FF:000002">
    <property type="entry name" value="Transaldolase"/>
    <property type="match status" value="1"/>
</dbReference>
<dbReference type="Gene3D" id="3.20.20.70">
    <property type="entry name" value="Aldolase class I"/>
    <property type="match status" value="1"/>
</dbReference>
<dbReference type="HAMAP" id="MF_00492">
    <property type="entry name" value="Transaldolase_1"/>
    <property type="match status" value="1"/>
</dbReference>
<dbReference type="InterPro" id="IPR013785">
    <property type="entry name" value="Aldolase_TIM"/>
</dbReference>
<dbReference type="InterPro" id="IPR001585">
    <property type="entry name" value="TAL/FSA"/>
</dbReference>
<dbReference type="InterPro" id="IPR004730">
    <property type="entry name" value="Transaldolase_1"/>
</dbReference>
<dbReference type="InterPro" id="IPR018225">
    <property type="entry name" value="Transaldolase_AS"/>
</dbReference>
<dbReference type="NCBIfam" id="NF009001">
    <property type="entry name" value="PRK12346.1"/>
    <property type="match status" value="1"/>
</dbReference>
<dbReference type="NCBIfam" id="TIGR00874">
    <property type="entry name" value="talAB"/>
    <property type="match status" value="1"/>
</dbReference>
<dbReference type="PANTHER" id="PTHR10683">
    <property type="entry name" value="TRANSALDOLASE"/>
    <property type="match status" value="1"/>
</dbReference>
<dbReference type="PANTHER" id="PTHR10683:SF18">
    <property type="entry name" value="TRANSALDOLASE"/>
    <property type="match status" value="1"/>
</dbReference>
<dbReference type="Pfam" id="PF00923">
    <property type="entry name" value="TAL_FSA"/>
    <property type="match status" value="1"/>
</dbReference>
<dbReference type="SUPFAM" id="SSF51569">
    <property type="entry name" value="Aldolase"/>
    <property type="match status" value="1"/>
</dbReference>
<dbReference type="PROSITE" id="PS01054">
    <property type="entry name" value="TRANSALDOLASE_1"/>
    <property type="match status" value="1"/>
</dbReference>
<dbReference type="PROSITE" id="PS00958">
    <property type="entry name" value="TRANSALDOLASE_2"/>
    <property type="match status" value="1"/>
</dbReference>
<feature type="chain" id="PRO_1000014495" description="Transaldolase">
    <location>
        <begin position="1"/>
        <end position="317"/>
    </location>
</feature>
<feature type="active site" description="Schiff-base intermediate with substrate" evidence="2">
    <location>
        <position position="126"/>
    </location>
</feature>
<organism>
    <name type="scientific">Burkholderia vietnamiensis (strain G4 / LMG 22486)</name>
    <name type="common">Burkholderia cepacia (strain R1808)</name>
    <dbReference type="NCBI Taxonomy" id="269482"/>
    <lineage>
        <taxon>Bacteria</taxon>
        <taxon>Pseudomonadati</taxon>
        <taxon>Pseudomonadota</taxon>
        <taxon>Betaproteobacteria</taxon>
        <taxon>Burkholderiales</taxon>
        <taxon>Burkholderiaceae</taxon>
        <taxon>Burkholderia</taxon>
        <taxon>Burkholderia cepacia complex</taxon>
    </lineage>
</organism>
<proteinExistence type="inferred from homology"/>
<comment type="function">
    <text evidence="2">Transaldolase is important for the balance of metabolites in the pentose-phosphate pathway.</text>
</comment>
<comment type="catalytic activity">
    <reaction evidence="2">
        <text>D-sedoheptulose 7-phosphate + D-glyceraldehyde 3-phosphate = D-erythrose 4-phosphate + beta-D-fructose 6-phosphate</text>
        <dbReference type="Rhea" id="RHEA:17053"/>
        <dbReference type="ChEBI" id="CHEBI:16897"/>
        <dbReference type="ChEBI" id="CHEBI:57483"/>
        <dbReference type="ChEBI" id="CHEBI:57634"/>
        <dbReference type="ChEBI" id="CHEBI:59776"/>
        <dbReference type="EC" id="2.2.1.2"/>
    </reaction>
</comment>
<comment type="pathway">
    <text evidence="2">Carbohydrate degradation; pentose phosphate pathway; D-glyceraldehyde 3-phosphate and beta-D-fructose 6-phosphate from D-ribose 5-phosphate and D-xylulose 5-phosphate (non-oxidative stage): step 2/3.</text>
</comment>
<comment type="subunit">
    <text evidence="1">Homodimer.</text>
</comment>
<comment type="subcellular location">
    <subcellularLocation>
        <location evidence="2">Cytoplasm</location>
    </subcellularLocation>
</comment>
<comment type="similarity">
    <text evidence="2">Belongs to the transaldolase family. Type 1 subfamily.</text>
</comment>
<name>TAL_BURVG</name>
<keyword id="KW-0963">Cytoplasm</keyword>
<keyword id="KW-0570">Pentose shunt</keyword>
<keyword id="KW-0704">Schiff base</keyword>
<keyword id="KW-0808">Transferase</keyword>
<gene>
    <name evidence="2" type="primary">tal</name>
    <name type="ordered locus">Bcep1808_2425</name>
</gene>
<accession>A4JGM1</accession>
<sequence>MTTALDQLKQYTTVVADTGDFQQLAQYKPQDATTNPSLILKAVQKDAYKPILEKTVRDHRNESTDFIIDRLLIAFGTEILKLIPGRVSTEVDARLSFDTQRSIDKGRELIKLYEAAGIGRERILIKLASTWEGIRAAQVLQQEGIKCNMTLLFSLVQAAACAEAGAQLISPFVGRIYDWYKKQAGADWDEAKDGGANDPGVQSVRRIYTYYKTFGYHTEVMGASFRTTSQIIELAGCDLLTISPDLLQKLQDSNDPVERKLSPDALHDKPTERVAIDEASFRFQLNDDAMATEKLAEGIRVFAADAVKLEKLIAALR</sequence>
<protein>
    <recommendedName>
        <fullName evidence="2">Transaldolase</fullName>
        <ecNumber evidence="2">2.2.1.2</ecNumber>
    </recommendedName>
</protein>